<protein>
    <recommendedName>
        <fullName evidence="1">1,4-dihydroxy-2-naphthoyl-CoA hydrolase</fullName>
        <shortName evidence="1">DHNA-CoA hydrolase</shortName>
        <ecNumber evidence="1">3.1.2.28</ecNumber>
    </recommendedName>
    <alternativeName>
        <fullName evidence="1">DHNA-CoA thioesterase</fullName>
    </alternativeName>
</protein>
<feature type="chain" id="PRO_0000377013" description="1,4-dihydroxy-2-naphthoyl-CoA hydrolase">
    <location>
        <begin position="1"/>
        <end position="138"/>
    </location>
</feature>
<feature type="active site" evidence="1">
    <location>
        <position position="13"/>
    </location>
</feature>
<name>DNCH_MICAN</name>
<organism>
    <name type="scientific">Microcystis aeruginosa (strain NIES-843 / IAM M-2473)</name>
    <dbReference type="NCBI Taxonomy" id="449447"/>
    <lineage>
        <taxon>Bacteria</taxon>
        <taxon>Bacillati</taxon>
        <taxon>Cyanobacteriota</taxon>
        <taxon>Cyanophyceae</taxon>
        <taxon>Oscillatoriophycideae</taxon>
        <taxon>Chroococcales</taxon>
        <taxon>Microcystaceae</taxon>
        <taxon>Microcystis</taxon>
    </lineage>
</organism>
<accession>B0JQL4</accession>
<proteinExistence type="inferred from homology"/>
<dbReference type="EC" id="3.1.2.28" evidence="1"/>
<dbReference type="EMBL" id="AP009552">
    <property type="protein sequence ID" value="BAG00673.1"/>
    <property type="molecule type" value="Genomic_DNA"/>
</dbReference>
<dbReference type="RefSeq" id="WP_012264388.1">
    <property type="nucleotide sequence ID" value="NC_010296.1"/>
</dbReference>
<dbReference type="SMR" id="B0JQL4"/>
<dbReference type="STRING" id="449447.MAE_08510"/>
<dbReference type="PaxDb" id="449447-MAE_08510"/>
<dbReference type="EnsemblBacteria" id="BAG00673">
    <property type="protein sequence ID" value="BAG00673"/>
    <property type="gene ID" value="MAE_08510"/>
</dbReference>
<dbReference type="KEGG" id="mar:MAE_08510"/>
<dbReference type="PATRIC" id="fig|449447.4.peg.790"/>
<dbReference type="eggNOG" id="COG0824">
    <property type="taxonomic scope" value="Bacteria"/>
</dbReference>
<dbReference type="HOGENOM" id="CLU_101141_5_3_3"/>
<dbReference type="BioCyc" id="MAER449447:MAE_RS03785-MONOMER"/>
<dbReference type="UniPathway" id="UPA00995"/>
<dbReference type="UniPathway" id="UPA01057">
    <property type="reaction ID" value="UER01033"/>
</dbReference>
<dbReference type="Proteomes" id="UP000001510">
    <property type="component" value="Chromosome"/>
</dbReference>
<dbReference type="GO" id="GO:0061522">
    <property type="term" value="F:1,4-dihydroxy-2-naphthoyl-CoA thioesterase activity"/>
    <property type="evidence" value="ECO:0007669"/>
    <property type="project" value="UniProtKB-EC"/>
</dbReference>
<dbReference type="GO" id="GO:0047617">
    <property type="term" value="F:fatty acyl-CoA hydrolase activity"/>
    <property type="evidence" value="ECO:0007669"/>
    <property type="project" value="TreeGrafter"/>
</dbReference>
<dbReference type="GO" id="GO:0042372">
    <property type="term" value="P:phylloquinone biosynthetic process"/>
    <property type="evidence" value="ECO:0007669"/>
    <property type="project" value="UniProtKB-UniRule"/>
</dbReference>
<dbReference type="CDD" id="cd00586">
    <property type="entry name" value="4HBT"/>
    <property type="match status" value="1"/>
</dbReference>
<dbReference type="Gene3D" id="3.10.129.10">
    <property type="entry name" value="Hotdog Thioesterase"/>
    <property type="match status" value="1"/>
</dbReference>
<dbReference type="HAMAP" id="MF_02101">
    <property type="entry name" value="DHNA_CoA_hydrolase"/>
    <property type="match status" value="1"/>
</dbReference>
<dbReference type="InterPro" id="IPR050563">
    <property type="entry name" value="4-hydroxybenzoyl-CoA_TE"/>
</dbReference>
<dbReference type="InterPro" id="IPR022829">
    <property type="entry name" value="DHNA_CoA_hydrolase"/>
</dbReference>
<dbReference type="InterPro" id="IPR029069">
    <property type="entry name" value="HotDog_dom_sf"/>
</dbReference>
<dbReference type="InterPro" id="IPR006684">
    <property type="entry name" value="YbgC/YbaW"/>
</dbReference>
<dbReference type="PANTHER" id="PTHR31793">
    <property type="entry name" value="4-HYDROXYBENZOYL-COA THIOESTERASE FAMILY MEMBER"/>
    <property type="match status" value="1"/>
</dbReference>
<dbReference type="PANTHER" id="PTHR31793:SF37">
    <property type="entry name" value="ACYL-COA THIOESTER HYDROLASE YBGC"/>
    <property type="match status" value="1"/>
</dbReference>
<dbReference type="Pfam" id="PF13279">
    <property type="entry name" value="4HBT_2"/>
    <property type="match status" value="1"/>
</dbReference>
<dbReference type="PIRSF" id="PIRSF003230">
    <property type="entry name" value="YbgC"/>
    <property type="match status" value="1"/>
</dbReference>
<dbReference type="SUPFAM" id="SSF54637">
    <property type="entry name" value="Thioesterase/thiol ester dehydrase-isomerase"/>
    <property type="match status" value="1"/>
</dbReference>
<comment type="function">
    <text evidence="1">Catalyzes the hydrolysis of 1,4-dihydroxy-2-naphthoyl-CoA (DHNA-CoA) to 1,4-dihydroxy-2-naphthoate (DHNA), a reaction involved in phylloquinone (vitamin K1) biosynthesis.</text>
</comment>
<comment type="catalytic activity">
    <reaction evidence="1">
        <text>1,4-dihydroxy-2-naphthoyl-CoA + H2O = 1,4-dihydroxy-2-naphthoate + CoA + H(+)</text>
        <dbReference type="Rhea" id="RHEA:26309"/>
        <dbReference type="ChEBI" id="CHEBI:11173"/>
        <dbReference type="ChEBI" id="CHEBI:15377"/>
        <dbReference type="ChEBI" id="CHEBI:15378"/>
        <dbReference type="ChEBI" id="CHEBI:57287"/>
        <dbReference type="ChEBI" id="CHEBI:58897"/>
        <dbReference type="EC" id="3.1.2.28"/>
    </reaction>
</comment>
<comment type="pathway">
    <text evidence="1">Cofactor biosynthesis; phylloquinone biosynthesis.</text>
</comment>
<comment type="pathway">
    <text evidence="1">Quinol/quinone metabolism; 1,4-dihydroxy-2-naphthoate biosynthesis; 1,4-dihydroxy-2-naphthoate from chorismate: step 7/7.</text>
</comment>
<comment type="similarity">
    <text evidence="1">Belongs to the 4-hydroxybenzoyl-CoA thioesterase family. DHNA-CoA hydrolase subfamily.</text>
</comment>
<keyword id="KW-0378">Hydrolase</keyword>
<gene>
    <name type="ordered locus">MAE_08510</name>
</gene>
<evidence type="ECO:0000255" key="1">
    <source>
        <dbReference type="HAMAP-Rule" id="MF_02101"/>
    </source>
</evidence>
<sequence>MPYERLIYLADTDAAGVVYFAHLLSICHEAYEFSLAQFGINIKDFFKDSPVALPITQAEIQFFRPLFCGDRIQIDFTVRSLSENEFQLQYKIYLAEIMVAKAKTRHVCIAPTARKRIPLPESLKHWLGYLSTLEETGI</sequence>
<reference key="1">
    <citation type="journal article" date="2007" name="DNA Res.">
        <title>Complete genomic structure of the bloom-forming toxic cyanobacterium Microcystis aeruginosa NIES-843.</title>
        <authorList>
            <person name="Kaneko T."/>
            <person name="Nakajima N."/>
            <person name="Okamoto S."/>
            <person name="Suzuki I."/>
            <person name="Tanabe Y."/>
            <person name="Tamaoki M."/>
            <person name="Nakamura Y."/>
            <person name="Kasai F."/>
            <person name="Watanabe A."/>
            <person name="Kawashima K."/>
            <person name="Kishida Y."/>
            <person name="Ono A."/>
            <person name="Shimizu Y."/>
            <person name="Takahashi C."/>
            <person name="Minami C."/>
            <person name="Fujishiro T."/>
            <person name="Kohara M."/>
            <person name="Katoh M."/>
            <person name="Nakazaki N."/>
            <person name="Nakayama S."/>
            <person name="Yamada M."/>
            <person name="Tabata S."/>
            <person name="Watanabe M.M."/>
        </authorList>
    </citation>
    <scope>NUCLEOTIDE SEQUENCE [LARGE SCALE GENOMIC DNA]</scope>
    <source>
        <strain>NIES-843 / IAM M-247</strain>
    </source>
</reference>